<protein>
    <recommendedName>
        <fullName>Mitogen-activated protein kinase HOG1</fullName>
        <shortName>MAP kinase HOG1</shortName>
        <ecNumber evidence="2">2.7.11.24</ecNumber>
    </recommendedName>
    <alternativeName>
        <fullName>WmHog1</fullName>
    </alternativeName>
</protein>
<proteinExistence type="inferred from homology"/>
<keyword id="KW-0010">Activator</keyword>
<keyword id="KW-0067">ATP-binding</keyword>
<keyword id="KW-0963">Cytoplasm</keyword>
<keyword id="KW-0418">Kinase</keyword>
<keyword id="KW-0547">Nucleotide-binding</keyword>
<keyword id="KW-0539">Nucleus</keyword>
<keyword id="KW-0597">Phosphoprotein</keyword>
<keyword id="KW-0723">Serine/threonine-protein kinase</keyword>
<keyword id="KW-0804">Transcription</keyword>
<keyword id="KW-0805">Transcription regulation</keyword>
<keyword id="KW-0808">Transferase</keyword>
<sequence length="278" mass="32283">GRGNSIKHLRHENIISLLDVFISPGEDIYFITELLGTDLHRLLSSRPLERQFVQYFLYQMLRALKFVHPAGVVHRDLKPSNILINENCDLKICDFGLARLQDPQMTGYVSTRYYRAPEIMLTWQEYDSAVDIWSIGCIFAEMIDGRPIFPGKDHVHQLTVITELLGSPPEDVINTITSENTRRFVDALPKREKIPFQQRFPNANEEEIDLLEKMLDFNPKERITAADAIQHPYLAPYHDPSDEPVANERFDWSFNDADLPVDQWKVMMYSEILITSEF</sequence>
<gene>
    <name type="primary">HOG1</name>
</gene>
<accession>A3EZ53</accession>
<comment type="function">
    <text evidence="4">Proline-directed serine/threonine-protein kinase involved in a signal transduction pathway that is activated by changes in the osmolarity of the extracellular environment. Controls osmotic regulation of transcription of target genes.</text>
</comment>
<comment type="catalytic activity">
    <reaction evidence="2">
        <text>L-seryl-[protein] + ATP = O-phospho-L-seryl-[protein] + ADP + H(+)</text>
        <dbReference type="Rhea" id="RHEA:17989"/>
        <dbReference type="Rhea" id="RHEA-COMP:9863"/>
        <dbReference type="Rhea" id="RHEA-COMP:11604"/>
        <dbReference type="ChEBI" id="CHEBI:15378"/>
        <dbReference type="ChEBI" id="CHEBI:29999"/>
        <dbReference type="ChEBI" id="CHEBI:30616"/>
        <dbReference type="ChEBI" id="CHEBI:83421"/>
        <dbReference type="ChEBI" id="CHEBI:456216"/>
        <dbReference type="EC" id="2.7.11.24"/>
    </reaction>
    <physiologicalReaction direction="left-to-right" evidence="2">
        <dbReference type="Rhea" id="RHEA:17990"/>
    </physiologicalReaction>
</comment>
<comment type="catalytic activity">
    <reaction evidence="2">
        <text>L-threonyl-[protein] + ATP = O-phospho-L-threonyl-[protein] + ADP + H(+)</text>
        <dbReference type="Rhea" id="RHEA:46608"/>
        <dbReference type="Rhea" id="RHEA-COMP:11060"/>
        <dbReference type="Rhea" id="RHEA-COMP:11605"/>
        <dbReference type="ChEBI" id="CHEBI:15378"/>
        <dbReference type="ChEBI" id="CHEBI:30013"/>
        <dbReference type="ChEBI" id="CHEBI:30616"/>
        <dbReference type="ChEBI" id="CHEBI:61977"/>
        <dbReference type="ChEBI" id="CHEBI:456216"/>
        <dbReference type="EC" id="2.7.11.24"/>
    </reaction>
    <physiologicalReaction direction="left-to-right" evidence="2">
        <dbReference type="Rhea" id="RHEA:46609"/>
    </physiologicalReaction>
</comment>
<comment type="cofactor">
    <cofactor evidence="3">
        <name>Mg(2+)</name>
        <dbReference type="ChEBI" id="CHEBI:18420"/>
    </cofactor>
</comment>
<comment type="activity regulation">
    <text evidence="1">Activated by tyrosine and threonine phosphorylation.</text>
</comment>
<comment type="subcellular location">
    <subcellularLocation>
        <location evidence="1">Cytoplasm</location>
    </subcellularLocation>
    <subcellularLocation>
        <location evidence="1">Nucleus</location>
    </subcellularLocation>
</comment>
<comment type="domain">
    <text>The TXY motif contains the threonine and tyrosine residues whose phosphorylation activates the MAP kinases.</text>
</comment>
<comment type="PTM">
    <text evidence="1">Dually phosphorylated on Thr-106 and Tyr-108, which activates the enzyme.</text>
</comment>
<comment type="similarity">
    <text evidence="5">Belongs to the protein kinase superfamily. Ser/Thr protein kinase family. MAP kinase subfamily. HOG1 sub-subfamily.</text>
</comment>
<organism>
    <name type="scientific">Wallemia muriae</name>
    <dbReference type="NCBI Taxonomy" id="245175"/>
    <lineage>
        <taxon>Eukaryota</taxon>
        <taxon>Fungi</taxon>
        <taxon>Dikarya</taxon>
        <taxon>Basidiomycota</taxon>
        <taxon>Wallemiomycotina</taxon>
        <taxon>Wallemiomycetes</taxon>
        <taxon>Wallemiales</taxon>
        <taxon>Wallemiaceae</taxon>
        <taxon>Wallemia</taxon>
    </lineage>
</organism>
<reference key="1">
    <citation type="submission" date="2006-12" db="EMBL/GenBank/DDBJ databases">
        <title>Partial genomic DNA sequence of a putative MAP kinase HOG1 (WmHog1p) from Wallemia muriae.</title>
        <authorList>
            <person name="Vaupotic T."/>
            <person name="Plemenitas A."/>
        </authorList>
    </citation>
    <scope>NUCLEOTIDE SEQUENCE [GENOMIC DNA]</scope>
    <source>
        <strain>MZKI-B952</strain>
    </source>
</reference>
<name>HOG1_WALMU</name>
<dbReference type="EC" id="2.7.11.24" evidence="2"/>
<dbReference type="EMBL" id="EF158004">
    <property type="protein sequence ID" value="ABN54703.1"/>
    <property type="molecule type" value="Genomic_DNA"/>
</dbReference>
<dbReference type="SMR" id="A3EZ53"/>
<dbReference type="GO" id="GO:0005737">
    <property type="term" value="C:cytoplasm"/>
    <property type="evidence" value="ECO:0007669"/>
    <property type="project" value="UniProtKB-SubCell"/>
</dbReference>
<dbReference type="GO" id="GO:0005634">
    <property type="term" value="C:nucleus"/>
    <property type="evidence" value="ECO:0007669"/>
    <property type="project" value="UniProtKB-SubCell"/>
</dbReference>
<dbReference type="GO" id="GO:0005524">
    <property type="term" value="F:ATP binding"/>
    <property type="evidence" value="ECO:0007669"/>
    <property type="project" value="UniProtKB-KW"/>
</dbReference>
<dbReference type="GO" id="GO:0004707">
    <property type="term" value="F:MAP kinase activity"/>
    <property type="evidence" value="ECO:0007669"/>
    <property type="project" value="UniProtKB-EC"/>
</dbReference>
<dbReference type="GO" id="GO:0106310">
    <property type="term" value="F:protein serine kinase activity"/>
    <property type="evidence" value="ECO:0007669"/>
    <property type="project" value="RHEA"/>
</dbReference>
<dbReference type="FunFam" id="1.10.510.10:FF:000049">
    <property type="entry name" value="Mitogen-activated protein kinase"/>
    <property type="match status" value="1"/>
</dbReference>
<dbReference type="Gene3D" id="3.30.200.20">
    <property type="entry name" value="Phosphorylase Kinase, domain 1"/>
    <property type="match status" value="1"/>
</dbReference>
<dbReference type="Gene3D" id="1.10.510.10">
    <property type="entry name" value="Transferase(Phosphotransferase) domain 1"/>
    <property type="match status" value="1"/>
</dbReference>
<dbReference type="InterPro" id="IPR011009">
    <property type="entry name" value="Kinase-like_dom_sf"/>
</dbReference>
<dbReference type="InterPro" id="IPR050117">
    <property type="entry name" value="MAP_kinase"/>
</dbReference>
<dbReference type="InterPro" id="IPR008352">
    <property type="entry name" value="MAPK_p38-like"/>
</dbReference>
<dbReference type="InterPro" id="IPR000719">
    <property type="entry name" value="Prot_kinase_dom"/>
</dbReference>
<dbReference type="InterPro" id="IPR008271">
    <property type="entry name" value="Ser/Thr_kinase_AS"/>
</dbReference>
<dbReference type="PANTHER" id="PTHR24055">
    <property type="entry name" value="MITOGEN-ACTIVATED PROTEIN KINASE"/>
    <property type="match status" value="1"/>
</dbReference>
<dbReference type="Pfam" id="PF00069">
    <property type="entry name" value="Pkinase"/>
    <property type="match status" value="1"/>
</dbReference>
<dbReference type="PRINTS" id="PR01773">
    <property type="entry name" value="P38MAPKINASE"/>
</dbReference>
<dbReference type="SMART" id="SM00220">
    <property type="entry name" value="S_TKc"/>
    <property type="match status" value="1"/>
</dbReference>
<dbReference type="SUPFAM" id="SSF56112">
    <property type="entry name" value="Protein kinase-like (PK-like)"/>
    <property type="match status" value="1"/>
</dbReference>
<dbReference type="PROSITE" id="PS50011">
    <property type="entry name" value="PROTEIN_KINASE_DOM"/>
    <property type="match status" value="1"/>
</dbReference>
<dbReference type="PROSITE" id="PS00108">
    <property type="entry name" value="PROTEIN_KINASE_ST"/>
    <property type="match status" value="1"/>
</dbReference>
<feature type="chain" id="PRO_0000289707" description="Mitogen-activated protein kinase HOG1">
    <location>
        <begin position="1" status="less than"/>
        <end position="278" status="greater than"/>
    </location>
</feature>
<feature type="domain" description="Protein kinase" evidence="5">
    <location>
        <begin position="1" status="less than"/>
        <end position="234"/>
    </location>
</feature>
<feature type="short sequence motif" description="TXY">
    <location>
        <begin position="106"/>
        <end position="108"/>
    </location>
</feature>
<feature type="modified residue" description="Phosphothreonine" evidence="1">
    <location>
        <position position="106"/>
    </location>
</feature>
<feature type="modified residue" description="Phosphotyrosine" evidence="1">
    <location>
        <position position="108"/>
    </location>
</feature>
<feature type="non-terminal residue">
    <location>
        <position position="1"/>
    </location>
</feature>
<feature type="non-terminal residue">
    <location>
        <position position="278"/>
    </location>
</feature>
<evidence type="ECO:0000250" key="1"/>
<evidence type="ECO:0000250" key="2">
    <source>
        <dbReference type="UniProtKB" id="P32485"/>
    </source>
</evidence>
<evidence type="ECO:0000250" key="3">
    <source>
        <dbReference type="UniProtKB" id="Q16539"/>
    </source>
</evidence>
<evidence type="ECO:0000250" key="4">
    <source>
        <dbReference type="UniProtKB" id="Q4WSF6"/>
    </source>
</evidence>
<evidence type="ECO:0000255" key="5">
    <source>
        <dbReference type="PROSITE-ProRule" id="PRU00159"/>
    </source>
</evidence>